<feature type="chain" id="PRO_0000348374" description="Glyoxylate/hydroxypyruvate reductase A">
    <location>
        <begin position="1"/>
        <end position="312"/>
    </location>
</feature>
<feature type="active site" evidence="1">
    <location>
        <position position="227"/>
    </location>
</feature>
<feature type="active site" description="Proton donor" evidence="1">
    <location>
        <position position="275"/>
    </location>
</feature>
<comment type="function">
    <text evidence="1">Catalyzes the NADPH-dependent reduction of glyoxylate and hydroxypyruvate into glycolate and glycerate, respectively.</text>
</comment>
<comment type="catalytic activity">
    <reaction evidence="1">
        <text>glycolate + NADP(+) = glyoxylate + NADPH + H(+)</text>
        <dbReference type="Rhea" id="RHEA:10992"/>
        <dbReference type="ChEBI" id="CHEBI:15378"/>
        <dbReference type="ChEBI" id="CHEBI:29805"/>
        <dbReference type="ChEBI" id="CHEBI:36655"/>
        <dbReference type="ChEBI" id="CHEBI:57783"/>
        <dbReference type="ChEBI" id="CHEBI:58349"/>
        <dbReference type="EC" id="1.1.1.79"/>
    </reaction>
</comment>
<comment type="catalytic activity">
    <reaction evidence="1">
        <text>(R)-glycerate + NAD(+) = 3-hydroxypyruvate + NADH + H(+)</text>
        <dbReference type="Rhea" id="RHEA:17905"/>
        <dbReference type="ChEBI" id="CHEBI:15378"/>
        <dbReference type="ChEBI" id="CHEBI:16659"/>
        <dbReference type="ChEBI" id="CHEBI:17180"/>
        <dbReference type="ChEBI" id="CHEBI:57540"/>
        <dbReference type="ChEBI" id="CHEBI:57945"/>
        <dbReference type="EC" id="1.1.1.81"/>
    </reaction>
</comment>
<comment type="catalytic activity">
    <reaction evidence="1">
        <text>(R)-glycerate + NADP(+) = 3-hydroxypyruvate + NADPH + H(+)</text>
        <dbReference type="Rhea" id="RHEA:18657"/>
        <dbReference type="ChEBI" id="CHEBI:15378"/>
        <dbReference type="ChEBI" id="CHEBI:16659"/>
        <dbReference type="ChEBI" id="CHEBI:17180"/>
        <dbReference type="ChEBI" id="CHEBI:57783"/>
        <dbReference type="ChEBI" id="CHEBI:58349"/>
        <dbReference type="EC" id="1.1.1.81"/>
    </reaction>
</comment>
<comment type="subcellular location">
    <subcellularLocation>
        <location evidence="1">Cytoplasm</location>
    </subcellularLocation>
</comment>
<comment type="similarity">
    <text evidence="1">Belongs to the D-isomer specific 2-hydroxyacid dehydrogenase family. GhrA subfamily.</text>
</comment>
<reference key="1">
    <citation type="submission" date="2008-05" db="EMBL/GenBank/DDBJ databases">
        <title>Complete sequence of Shigella boydii serotype 18 strain BS512.</title>
        <authorList>
            <person name="Rasko D.A."/>
            <person name="Rosovitz M."/>
            <person name="Maurelli A.T."/>
            <person name="Myers G."/>
            <person name="Seshadri R."/>
            <person name="Cer R."/>
            <person name="Jiang L."/>
            <person name="Ravel J."/>
            <person name="Sebastian Y."/>
        </authorList>
    </citation>
    <scope>NUCLEOTIDE SEQUENCE [LARGE SCALE GENOMIC DNA]</scope>
    <source>
        <strain>CDC 3083-94 / BS512</strain>
    </source>
</reference>
<evidence type="ECO:0000255" key="1">
    <source>
        <dbReference type="HAMAP-Rule" id="MF_01666"/>
    </source>
</evidence>
<organism>
    <name type="scientific">Shigella boydii serotype 18 (strain CDC 3083-94 / BS512)</name>
    <dbReference type="NCBI Taxonomy" id="344609"/>
    <lineage>
        <taxon>Bacteria</taxon>
        <taxon>Pseudomonadati</taxon>
        <taxon>Pseudomonadota</taxon>
        <taxon>Gammaproteobacteria</taxon>
        <taxon>Enterobacterales</taxon>
        <taxon>Enterobacteriaceae</taxon>
        <taxon>Shigella</taxon>
    </lineage>
</organism>
<sequence length="312" mass="35373">MDIIFYHPTFDTQWWIEALRKAIPQARVRAWKSGDNDSADYALVWHPPVEMLAGRDLKAVFALGAGVDSILSKLQAHPEMLNPSVPLFRLEDTGMGEQMQEYAVSQVLHWFRRFDDYRIQQNSSHWQPLPEYHWEDFTIGILGAGVLGSKVAQSLQTWRFPLRCWSRTRKSWPGVQSFAGREELSAFLSQCRVLINLLPNTPETVGIINQQLLEKLPDGAYLLNLARGVHVVEDDLLAALDSGKVKGAMLDVFNREPLPPESPLWQHPRVTITPHVAAITRPAEAVEYISRTIAQLEKGERVCGQVDRARGY</sequence>
<dbReference type="EC" id="1.1.1.79" evidence="1"/>
<dbReference type="EC" id="1.1.1.81" evidence="1"/>
<dbReference type="EMBL" id="CP001063">
    <property type="protein sequence ID" value="ACD09740.1"/>
    <property type="molecule type" value="Genomic_DNA"/>
</dbReference>
<dbReference type="RefSeq" id="WP_000351323.1">
    <property type="nucleotide sequence ID" value="NC_010658.1"/>
</dbReference>
<dbReference type="SMR" id="B2TTN6"/>
<dbReference type="STRING" id="344609.SbBS512_E2296"/>
<dbReference type="KEGG" id="sbc:SbBS512_E2296"/>
<dbReference type="HOGENOM" id="CLU_019796_1_0_6"/>
<dbReference type="Proteomes" id="UP000001030">
    <property type="component" value="Chromosome"/>
</dbReference>
<dbReference type="GO" id="GO:0005737">
    <property type="term" value="C:cytoplasm"/>
    <property type="evidence" value="ECO:0007669"/>
    <property type="project" value="UniProtKB-SubCell"/>
</dbReference>
<dbReference type="GO" id="GO:0030267">
    <property type="term" value="F:glyoxylate reductase (NADPH) activity"/>
    <property type="evidence" value="ECO:0007669"/>
    <property type="project" value="UniProtKB-UniRule"/>
</dbReference>
<dbReference type="GO" id="GO:0008465">
    <property type="term" value="F:hydroxypyruvate reductase (NADH) activity"/>
    <property type="evidence" value="ECO:0007669"/>
    <property type="project" value="RHEA"/>
</dbReference>
<dbReference type="GO" id="GO:0120509">
    <property type="term" value="F:hydroxypyruvate reductase (NADPH) activity"/>
    <property type="evidence" value="ECO:0007669"/>
    <property type="project" value="RHEA"/>
</dbReference>
<dbReference type="GO" id="GO:0051287">
    <property type="term" value="F:NAD binding"/>
    <property type="evidence" value="ECO:0007669"/>
    <property type="project" value="InterPro"/>
</dbReference>
<dbReference type="CDD" id="cd12164">
    <property type="entry name" value="GDH_like_2"/>
    <property type="match status" value="1"/>
</dbReference>
<dbReference type="FunFam" id="3.40.50.720:FF:000110">
    <property type="entry name" value="Glyoxylate/hydroxypyruvate reductase A"/>
    <property type="match status" value="1"/>
</dbReference>
<dbReference type="Gene3D" id="3.40.50.720">
    <property type="entry name" value="NAD(P)-binding Rossmann-like Domain"/>
    <property type="match status" value="2"/>
</dbReference>
<dbReference type="HAMAP" id="MF_01666">
    <property type="entry name" value="2_Hacid_dh_C_GhrA"/>
    <property type="match status" value="1"/>
</dbReference>
<dbReference type="InterPro" id="IPR029753">
    <property type="entry name" value="D-isomer_DH_CS"/>
</dbReference>
<dbReference type="InterPro" id="IPR006140">
    <property type="entry name" value="D-isomer_DH_NAD-bd"/>
</dbReference>
<dbReference type="InterPro" id="IPR023514">
    <property type="entry name" value="GhrA_Enterobacterales"/>
</dbReference>
<dbReference type="InterPro" id="IPR036291">
    <property type="entry name" value="NAD(P)-bd_dom_sf"/>
</dbReference>
<dbReference type="NCBIfam" id="NF012013">
    <property type="entry name" value="PRK15469.1"/>
    <property type="match status" value="1"/>
</dbReference>
<dbReference type="PANTHER" id="PTHR43333">
    <property type="entry name" value="2-HACID_DH_C DOMAIN-CONTAINING PROTEIN"/>
    <property type="match status" value="1"/>
</dbReference>
<dbReference type="PANTHER" id="PTHR43333:SF1">
    <property type="entry name" value="D-ISOMER SPECIFIC 2-HYDROXYACID DEHYDROGENASE NAD-BINDING DOMAIN-CONTAINING PROTEIN"/>
    <property type="match status" value="1"/>
</dbReference>
<dbReference type="Pfam" id="PF02826">
    <property type="entry name" value="2-Hacid_dh_C"/>
    <property type="match status" value="1"/>
</dbReference>
<dbReference type="SUPFAM" id="SSF51735">
    <property type="entry name" value="NAD(P)-binding Rossmann-fold domains"/>
    <property type="match status" value="1"/>
</dbReference>
<dbReference type="PROSITE" id="PS00671">
    <property type="entry name" value="D_2_HYDROXYACID_DH_3"/>
    <property type="match status" value="1"/>
</dbReference>
<proteinExistence type="inferred from homology"/>
<protein>
    <recommendedName>
        <fullName evidence="1">Glyoxylate/hydroxypyruvate reductase A</fullName>
        <ecNumber evidence="1">1.1.1.79</ecNumber>
        <ecNumber evidence="1">1.1.1.81</ecNumber>
    </recommendedName>
    <alternativeName>
        <fullName evidence="1">2-ketoacid reductase</fullName>
    </alternativeName>
</protein>
<gene>
    <name evidence="1" type="primary">ghrA</name>
    <name type="ordered locus">SbBS512_E2296</name>
</gene>
<keyword id="KW-0963">Cytoplasm</keyword>
<keyword id="KW-0520">NAD</keyword>
<keyword id="KW-0521">NADP</keyword>
<keyword id="KW-0560">Oxidoreductase</keyword>
<keyword id="KW-1185">Reference proteome</keyword>
<accession>B2TTN6</accession>
<name>GHRA_SHIB3</name>